<feature type="chain" id="PRO_0000149764" description="Antitoxin HigA">
    <location>
        <begin position="1"/>
        <end position="138"/>
    </location>
</feature>
<feature type="domain" description="HTH cro/C1-type" evidence="2">
    <location>
        <begin position="84"/>
        <end position="136"/>
    </location>
</feature>
<feature type="DNA-binding region" description="H-T-H motif" evidence="2">
    <location>
        <begin position="95"/>
        <end position="114"/>
    </location>
</feature>
<organism>
    <name type="scientific">Escherichia coli O6:H1 (strain CFT073 / ATCC 700928 / UPEC)</name>
    <dbReference type="NCBI Taxonomy" id="199310"/>
    <lineage>
        <taxon>Bacteria</taxon>
        <taxon>Pseudomonadati</taxon>
        <taxon>Pseudomonadota</taxon>
        <taxon>Gammaproteobacteria</taxon>
        <taxon>Enterobacterales</taxon>
        <taxon>Enterobacteriaceae</taxon>
        <taxon>Escherichia</taxon>
    </lineage>
</organism>
<gene>
    <name type="primary">higA</name>
    <name type="ordered locus">c3840</name>
</gene>
<name>HIGA_ECOL6</name>
<protein>
    <recommendedName>
        <fullName>Antitoxin HigA</fullName>
    </recommendedName>
</protein>
<accession>P67702</accession>
<accession>P42594</accession>
<keyword id="KW-0238">DNA-binding</keyword>
<keyword id="KW-1185">Reference proteome</keyword>
<keyword id="KW-0678">Repressor</keyword>
<keyword id="KW-1277">Toxin-antitoxin system</keyword>
<keyword id="KW-0804">Transcription</keyword>
<keyword id="KW-0805">Transcription regulation</keyword>
<reference key="1">
    <citation type="journal article" date="2002" name="Proc. Natl. Acad. Sci. U.S.A.">
        <title>Extensive mosaic structure revealed by the complete genome sequence of uropathogenic Escherichia coli.</title>
        <authorList>
            <person name="Welch R.A."/>
            <person name="Burland V."/>
            <person name="Plunkett G. III"/>
            <person name="Redford P."/>
            <person name="Roesch P."/>
            <person name="Rasko D."/>
            <person name="Buckles E.L."/>
            <person name="Liou S.-R."/>
            <person name="Boutin A."/>
            <person name="Hackett J."/>
            <person name="Stroud D."/>
            <person name="Mayhew G.F."/>
            <person name="Rose D.J."/>
            <person name="Zhou S."/>
            <person name="Schwartz D.C."/>
            <person name="Perna N.T."/>
            <person name="Mobley H.L.T."/>
            <person name="Donnenberg M.S."/>
            <person name="Blattner F.R."/>
        </authorList>
    </citation>
    <scope>NUCLEOTIDE SEQUENCE [LARGE SCALE GENOMIC DNA]</scope>
    <source>
        <strain>CFT073 / ATCC 700928 / UPEC</strain>
    </source>
</reference>
<reference key="2">
    <citation type="journal article" date="2012" name="PLoS Pathog.">
        <title>Toxin-antitoxin systems are important for niche-specific colonization and stress resistance of uropathogenic Escherichia coli.</title>
        <authorList>
            <person name="Norton J.P."/>
            <person name="Mulvey M.A."/>
        </authorList>
    </citation>
    <scope>DISRUPTION PHENOTYPE</scope>
    <source>
        <strain>CFT073 / ATCC 700928 / UPEC</strain>
    </source>
</reference>
<comment type="function">
    <text evidence="1">Antitoxin component of a type II toxin-antitoxin (TA) system. Functions as an mRNA interferase antitoxin.</text>
</comment>
<comment type="subunit">
    <text evidence="1">Probably forms a complex with the mRNA interferase HigB which inhibits the mRNA interferase activity.</text>
</comment>
<comment type="disruption phenotype">
    <text evidence="3">Deletion of the higB-higA operon has no effect on virulence in mouse infection; the disrupted strain is as virulent as wild-type.</text>
</comment>
<comment type="similarity">
    <text evidence="4">Belongs to the HigA antitoxin family.</text>
</comment>
<sequence length="138" mass="14995">MIAIADILQAGEKLTAVAPFLAGIQNEEQYTQALELVDHLLLNDPENPLLDLVCAKITAWEESAPEFAEFNAMAQAMPGGIAVIRTLMDQYGLTLSDLPEIGSKSMVSRVLSGKRKLTLEHAKKLATRFGISPALFID</sequence>
<evidence type="ECO:0000250" key="1">
    <source>
        <dbReference type="UniProtKB" id="P67701"/>
    </source>
</evidence>
<evidence type="ECO:0000255" key="2">
    <source>
        <dbReference type="PROSITE-ProRule" id="PRU00257"/>
    </source>
</evidence>
<evidence type="ECO:0000269" key="3">
    <source>
    </source>
</evidence>
<evidence type="ECO:0000305" key="4"/>
<proteinExistence type="inferred from homology"/>
<dbReference type="EMBL" id="AE014075">
    <property type="protein sequence ID" value="AAN82285.1"/>
    <property type="molecule type" value="Genomic_DNA"/>
</dbReference>
<dbReference type="RefSeq" id="WP_000560266.1">
    <property type="nucleotide sequence ID" value="NZ_CP051263.1"/>
</dbReference>
<dbReference type="SMR" id="P67702"/>
<dbReference type="STRING" id="199310.c3840"/>
<dbReference type="KEGG" id="ecc:c3840"/>
<dbReference type="eggNOG" id="COG5499">
    <property type="taxonomic scope" value="Bacteria"/>
</dbReference>
<dbReference type="HOGENOM" id="CLU_125852_0_0_6"/>
<dbReference type="BioCyc" id="ECOL199310:C3840-MONOMER"/>
<dbReference type="Proteomes" id="UP000001410">
    <property type="component" value="Chromosome"/>
</dbReference>
<dbReference type="GO" id="GO:0001046">
    <property type="term" value="F:core promoter sequence-specific DNA binding"/>
    <property type="evidence" value="ECO:0007669"/>
    <property type="project" value="TreeGrafter"/>
</dbReference>
<dbReference type="GO" id="GO:0006355">
    <property type="term" value="P:regulation of DNA-templated transcription"/>
    <property type="evidence" value="ECO:0007669"/>
    <property type="project" value="InterPro"/>
</dbReference>
<dbReference type="CDD" id="cd00093">
    <property type="entry name" value="HTH_XRE"/>
    <property type="match status" value="1"/>
</dbReference>
<dbReference type="FunFam" id="1.10.260.40:FF:000026">
    <property type="entry name" value="Predicted DNA-binding transcriptional regulator"/>
    <property type="match status" value="1"/>
</dbReference>
<dbReference type="Gene3D" id="1.10.260.40">
    <property type="entry name" value="lambda repressor-like DNA-binding domains"/>
    <property type="match status" value="1"/>
</dbReference>
<dbReference type="InterPro" id="IPR039060">
    <property type="entry name" value="Antitox_HigA"/>
</dbReference>
<dbReference type="InterPro" id="IPR001387">
    <property type="entry name" value="Cro/C1-type_HTH"/>
</dbReference>
<dbReference type="InterPro" id="IPR010982">
    <property type="entry name" value="Lambda_DNA-bd_dom_sf"/>
</dbReference>
<dbReference type="PANTHER" id="PTHR40455">
    <property type="entry name" value="ANTITOXIN HIGA"/>
    <property type="match status" value="1"/>
</dbReference>
<dbReference type="PANTHER" id="PTHR40455:SF1">
    <property type="entry name" value="ANTITOXIN HIGA"/>
    <property type="match status" value="1"/>
</dbReference>
<dbReference type="Pfam" id="PF01381">
    <property type="entry name" value="HTH_3"/>
    <property type="match status" value="1"/>
</dbReference>
<dbReference type="SMART" id="SM00530">
    <property type="entry name" value="HTH_XRE"/>
    <property type="match status" value="1"/>
</dbReference>
<dbReference type="SUPFAM" id="SSF47413">
    <property type="entry name" value="lambda repressor-like DNA-binding domains"/>
    <property type="match status" value="1"/>
</dbReference>
<dbReference type="PROSITE" id="PS50943">
    <property type="entry name" value="HTH_CROC1"/>
    <property type="match status" value="1"/>
</dbReference>